<name>RL33_HELAH</name>
<accession>Q17VM9</accession>
<organism>
    <name type="scientific">Helicobacter acinonychis (strain Sheeba)</name>
    <dbReference type="NCBI Taxonomy" id="382638"/>
    <lineage>
        <taxon>Bacteria</taxon>
        <taxon>Pseudomonadati</taxon>
        <taxon>Campylobacterota</taxon>
        <taxon>Epsilonproteobacteria</taxon>
        <taxon>Campylobacterales</taxon>
        <taxon>Helicobacteraceae</taxon>
        <taxon>Helicobacter</taxon>
    </lineage>
</organism>
<dbReference type="EMBL" id="AM260522">
    <property type="protein sequence ID" value="CAK00297.1"/>
    <property type="molecule type" value="Genomic_DNA"/>
</dbReference>
<dbReference type="RefSeq" id="WP_011578380.1">
    <property type="nucleotide sequence ID" value="NC_008229.1"/>
</dbReference>
<dbReference type="SMR" id="Q17VM9"/>
<dbReference type="STRING" id="382638.Hac_1585"/>
<dbReference type="GeneID" id="31758838"/>
<dbReference type="KEGG" id="hac:Hac_1585"/>
<dbReference type="eggNOG" id="COG0267">
    <property type="taxonomic scope" value="Bacteria"/>
</dbReference>
<dbReference type="HOGENOM" id="CLU_190949_0_2_7"/>
<dbReference type="OrthoDB" id="21586at2"/>
<dbReference type="BioCyc" id="HACI382638:HAC_RS06685-MONOMER"/>
<dbReference type="Proteomes" id="UP000000775">
    <property type="component" value="Chromosome"/>
</dbReference>
<dbReference type="GO" id="GO:0005737">
    <property type="term" value="C:cytoplasm"/>
    <property type="evidence" value="ECO:0007669"/>
    <property type="project" value="UniProtKB-ARBA"/>
</dbReference>
<dbReference type="GO" id="GO:1990904">
    <property type="term" value="C:ribonucleoprotein complex"/>
    <property type="evidence" value="ECO:0007669"/>
    <property type="project" value="UniProtKB-KW"/>
</dbReference>
<dbReference type="GO" id="GO:0005840">
    <property type="term" value="C:ribosome"/>
    <property type="evidence" value="ECO:0007669"/>
    <property type="project" value="UniProtKB-KW"/>
</dbReference>
<dbReference type="GO" id="GO:0003735">
    <property type="term" value="F:structural constituent of ribosome"/>
    <property type="evidence" value="ECO:0007669"/>
    <property type="project" value="InterPro"/>
</dbReference>
<dbReference type="GO" id="GO:0006412">
    <property type="term" value="P:translation"/>
    <property type="evidence" value="ECO:0007669"/>
    <property type="project" value="UniProtKB-UniRule"/>
</dbReference>
<dbReference type="Gene3D" id="2.20.28.120">
    <property type="entry name" value="Ribosomal protein L33"/>
    <property type="match status" value="1"/>
</dbReference>
<dbReference type="HAMAP" id="MF_00294">
    <property type="entry name" value="Ribosomal_bL33"/>
    <property type="match status" value="1"/>
</dbReference>
<dbReference type="InterPro" id="IPR001705">
    <property type="entry name" value="Ribosomal_bL33"/>
</dbReference>
<dbReference type="InterPro" id="IPR018264">
    <property type="entry name" value="Ribosomal_bL33_CS"/>
</dbReference>
<dbReference type="InterPro" id="IPR038584">
    <property type="entry name" value="Ribosomal_bL33_sf"/>
</dbReference>
<dbReference type="InterPro" id="IPR011332">
    <property type="entry name" value="Ribosomal_zn-bd"/>
</dbReference>
<dbReference type="NCBIfam" id="NF001764">
    <property type="entry name" value="PRK00504.1"/>
    <property type="match status" value="1"/>
</dbReference>
<dbReference type="NCBIfam" id="NF001860">
    <property type="entry name" value="PRK00595.1"/>
    <property type="match status" value="1"/>
</dbReference>
<dbReference type="NCBIfam" id="TIGR01023">
    <property type="entry name" value="rpmG_bact"/>
    <property type="match status" value="1"/>
</dbReference>
<dbReference type="PANTHER" id="PTHR43168">
    <property type="entry name" value="50S RIBOSOMAL PROTEIN L33, CHLOROPLASTIC"/>
    <property type="match status" value="1"/>
</dbReference>
<dbReference type="PANTHER" id="PTHR43168:SF6">
    <property type="entry name" value="LARGE RIBOSOMAL SUBUNIT PROTEIN BL33A"/>
    <property type="match status" value="1"/>
</dbReference>
<dbReference type="Pfam" id="PF00471">
    <property type="entry name" value="Ribosomal_L33"/>
    <property type="match status" value="1"/>
</dbReference>
<dbReference type="SUPFAM" id="SSF57829">
    <property type="entry name" value="Zn-binding ribosomal proteins"/>
    <property type="match status" value="1"/>
</dbReference>
<dbReference type="PROSITE" id="PS00582">
    <property type="entry name" value="RIBOSOMAL_L33"/>
    <property type="match status" value="1"/>
</dbReference>
<evidence type="ECO:0000255" key="1">
    <source>
        <dbReference type="HAMAP-Rule" id="MF_00294"/>
    </source>
</evidence>
<evidence type="ECO:0000305" key="2"/>
<comment type="similarity">
    <text evidence="1">Belongs to the bacterial ribosomal protein bL33 family.</text>
</comment>
<reference key="1">
    <citation type="journal article" date="2006" name="PLoS Genet.">
        <title>Who ate whom? Adaptive Helicobacter genomic changes that accompanied a host jump from early humans to large felines.</title>
        <authorList>
            <person name="Eppinger M."/>
            <person name="Baar C."/>
            <person name="Linz B."/>
            <person name="Raddatz G."/>
            <person name="Lanz C."/>
            <person name="Keller H."/>
            <person name="Morelli G."/>
            <person name="Gressmann H."/>
            <person name="Achtman M."/>
            <person name="Schuster S.C."/>
        </authorList>
    </citation>
    <scope>NUCLEOTIDE SEQUENCE [LARGE SCALE GENOMIC DNA]</scope>
    <source>
        <strain>Sheeba</strain>
    </source>
</reference>
<sequence>MKVKIGLKCSDCEDINYSTTKNAKTNTEKLELNKFCPRENKHTIHKEIKLKS</sequence>
<gene>
    <name evidence="1" type="primary">rpmG</name>
    <name type="ordered locus">Hac_1585</name>
</gene>
<keyword id="KW-0687">Ribonucleoprotein</keyword>
<keyword id="KW-0689">Ribosomal protein</keyword>
<proteinExistence type="inferred from homology"/>
<feature type="chain" id="PRO_0000356479" description="Large ribosomal subunit protein bL33">
    <location>
        <begin position="1"/>
        <end position="52"/>
    </location>
</feature>
<protein>
    <recommendedName>
        <fullName evidence="1">Large ribosomal subunit protein bL33</fullName>
    </recommendedName>
    <alternativeName>
        <fullName evidence="2">50S ribosomal protein L33</fullName>
    </alternativeName>
</protein>